<dbReference type="EMBL" id="X67204">
    <property type="protein sequence ID" value="CAB56798.1"/>
    <property type="molecule type" value="Genomic_DNA"/>
</dbReference>
<dbReference type="EMBL" id="U03645">
    <property type="protein sequence ID" value="AAB60446.1"/>
    <property type="molecule type" value="Genomic_DNA"/>
</dbReference>
<dbReference type="EMBL" id="LC532173">
    <property type="protein sequence ID" value="BCB24294.1"/>
    <property type="molecule type" value="mRNA"/>
</dbReference>
<dbReference type="EMBL" id="X55491">
    <property type="protein sequence ID" value="CAA39111.1"/>
    <property type="molecule type" value="Genomic_DNA"/>
</dbReference>
<dbReference type="CCDS" id="CCDS30545.1">
    <molecule id="Q05738-2"/>
</dbReference>
<dbReference type="PIR" id="S35565">
    <property type="entry name" value="S35565"/>
</dbReference>
<dbReference type="PIR" id="S43344">
    <property type="entry name" value="S43344"/>
</dbReference>
<dbReference type="RefSeq" id="NP_035694.1">
    <molecule id="Q05738-2"/>
    <property type="nucleotide sequence ID" value="NM_011564.1"/>
</dbReference>
<dbReference type="SMR" id="Q05738"/>
<dbReference type="BioGRID" id="204096">
    <property type="interactions" value="4"/>
</dbReference>
<dbReference type="FunCoup" id="Q05738">
    <property type="interactions" value="163"/>
</dbReference>
<dbReference type="IntAct" id="Q05738">
    <property type="interactions" value="1"/>
</dbReference>
<dbReference type="MINT" id="Q05738"/>
<dbReference type="STRING" id="10090.ENSMUSP00000088717"/>
<dbReference type="iPTMnet" id="Q05738"/>
<dbReference type="PhosphoSitePlus" id="Q05738"/>
<dbReference type="PaxDb" id="10090-ENSMUSP00000088717"/>
<dbReference type="ProteomicsDB" id="258733">
    <molecule id="Q05738-1"/>
</dbReference>
<dbReference type="Antibodypedia" id="599">
    <property type="antibodies" value="339 antibodies from 32 providers"/>
</dbReference>
<dbReference type="DNASU" id="21674"/>
<dbReference type="Ensembl" id="ENSMUST00000091178.2">
    <molecule id="Q05738-2"/>
    <property type="protein sequence ID" value="ENSMUSP00000088717.2"/>
    <property type="gene ID" value="ENSMUSG00000069036.4"/>
</dbReference>
<dbReference type="GeneID" id="21674"/>
<dbReference type="KEGG" id="mmu:21674"/>
<dbReference type="UCSC" id="uc012hrv.1">
    <molecule id="Q05738-1"/>
    <property type="organism name" value="mouse"/>
</dbReference>
<dbReference type="AGR" id="MGI:98660"/>
<dbReference type="CTD" id="6736"/>
<dbReference type="MGI" id="MGI:98660">
    <property type="gene designation" value="Sry"/>
</dbReference>
<dbReference type="VEuPathDB" id="HostDB:ENSMUSG00000069036"/>
<dbReference type="eggNOG" id="KOG0527">
    <property type="taxonomic scope" value="Eukaryota"/>
</dbReference>
<dbReference type="GeneTree" id="ENSGT00940000165583"/>
<dbReference type="HOGENOM" id="CLU_698210_0_0_1"/>
<dbReference type="InParanoid" id="Q05738"/>
<dbReference type="OMA" id="ETWPHYM"/>
<dbReference type="OrthoDB" id="82497at9989"/>
<dbReference type="PhylomeDB" id="Q05738"/>
<dbReference type="BioGRID-ORCS" id="21674">
    <property type="hits" value="1 hit in 77 CRISPR screens"/>
</dbReference>
<dbReference type="PRO" id="PR:Q05738"/>
<dbReference type="Proteomes" id="UP000000589">
    <property type="component" value="Chromosome Y"/>
</dbReference>
<dbReference type="RNAct" id="Q05738">
    <property type="molecule type" value="protein"/>
</dbReference>
<dbReference type="Bgee" id="ENSMUSG00000069036">
    <property type="expression patterns" value="Expressed in gonad primordium and 21 other cell types or tissues"/>
</dbReference>
<dbReference type="ExpressionAtlas" id="Q05738">
    <property type="expression patterns" value="differential"/>
</dbReference>
<dbReference type="GO" id="GO:0005737">
    <property type="term" value="C:cytoplasm"/>
    <property type="evidence" value="ECO:0007669"/>
    <property type="project" value="UniProtKB-SubCell"/>
</dbReference>
<dbReference type="GO" id="GO:0016607">
    <property type="term" value="C:nuclear speck"/>
    <property type="evidence" value="ECO:0007669"/>
    <property type="project" value="UniProtKB-SubCell"/>
</dbReference>
<dbReference type="GO" id="GO:0005654">
    <property type="term" value="C:nucleoplasm"/>
    <property type="evidence" value="ECO:0000304"/>
    <property type="project" value="Reactome"/>
</dbReference>
<dbReference type="GO" id="GO:0005634">
    <property type="term" value="C:nucleus"/>
    <property type="evidence" value="ECO:0000314"/>
    <property type="project" value="MGI"/>
</dbReference>
<dbReference type="GO" id="GO:0005667">
    <property type="term" value="C:transcription regulator complex"/>
    <property type="evidence" value="ECO:0000314"/>
    <property type="project" value="MGI"/>
</dbReference>
<dbReference type="GO" id="GO:0005516">
    <property type="term" value="F:calmodulin binding"/>
    <property type="evidence" value="ECO:0007669"/>
    <property type="project" value="UniProtKB-KW"/>
</dbReference>
<dbReference type="GO" id="GO:0003677">
    <property type="term" value="F:DNA binding"/>
    <property type="evidence" value="ECO:0000314"/>
    <property type="project" value="MGI"/>
</dbReference>
<dbReference type="GO" id="GO:0008301">
    <property type="term" value="F:DNA binding, bending"/>
    <property type="evidence" value="ECO:0000314"/>
    <property type="project" value="UniProtKB"/>
</dbReference>
<dbReference type="GO" id="GO:0000981">
    <property type="term" value="F:DNA-binding transcription factor activity, RNA polymerase II-specific"/>
    <property type="evidence" value="ECO:0000314"/>
    <property type="project" value="MGI"/>
</dbReference>
<dbReference type="GO" id="GO:0030154">
    <property type="term" value="P:cell differentiation"/>
    <property type="evidence" value="ECO:0007669"/>
    <property type="project" value="UniProtKB-KW"/>
</dbReference>
<dbReference type="GO" id="GO:0008584">
    <property type="term" value="P:male gonad development"/>
    <property type="evidence" value="ECO:0000314"/>
    <property type="project" value="UniProtKB"/>
</dbReference>
<dbReference type="GO" id="GO:0030238">
    <property type="term" value="P:male sex determination"/>
    <property type="evidence" value="ECO:0000314"/>
    <property type="project" value="UniProtKB"/>
</dbReference>
<dbReference type="GO" id="GO:0010629">
    <property type="term" value="P:negative regulation of gene expression"/>
    <property type="evidence" value="ECO:0000314"/>
    <property type="project" value="MGI"/>
</dbReference>
<dbReference type="GO" id="GO:0000122">
    <property type="term" value="P:negative regulation of transcription by RNA polymerase II"/>
    <property type="evidence" value="ECO:0000316"/>
    <property type="project" value="MGI"/>
</dbReference>
<dbReference type="GO" id="GO:0010628">
    <property type="term" value="P:positive regulation of gene expression"/>
    <property type="evidence" value="ECO:0000250"/>
    <property type="project" value="UniProtKB"/>
</dbReference>
<dbReference type="GO" id="GO:2000020">
    <property type="term" value="P:positive regulation of male gonad development"/>
    <property type="evidence" value="ECO:0000316"/>
    <property type="project" value="MGI"/>
</dbReference>
<dbReference type="GO" id="GO:0007530">
    <property type="term" value="P:sex determination"/>
    <property type="evidence" value="ECO:0000314"/>
    <property type="project" value="UniProtKB"/>
</dbReference>
<dbReference type="GO" id="GO:0007283">
    <property type="term" value="P:spermatogenesis"/>
    <property type="evidence" value="ECO:0000316"/>
    <property type="project" value="MGI"/>
</dbReference>
<dbReference type="CDD" id="cd22028">
    <property type="entry name" value="HMG-box_SoxA_SoxB_SoxG"/>
    <property type="match status" value="1"/>
</dbReference>
<dbReference type="FunFam" id="1.10.30.10:FF:000002">
    <property type="entry name" value="transcription factor Sox-2"/>
    <property type="match status" value="1"/>
</dbReference>
<dbReference type="Gene3D" id="1.10.30.10">
    <property type="entry name" value="High mobility group box domain"/>
    <property type="match status" value="1"/>
</dbReference>
<dbReference type="InterPro" id="IPR009071">
    <property type="entry name" value="HMG_box_dom"/>
</dbReference>
<dbReference type="InterPro" id="IPR036910">
    <property type="entry name" value="HMG_box_dom_sf"/>
</dbReference>
<dbReference type="InterPro" id="IPR050140">
    <property type="entry name" value="SRY-related_HMG-box_TF-like"/>
</dbReference>
<dbReference type="PANTHER" id="PTHR10270:SF161">
    <property type="entry name" value="SEX-DETERMINING REGION Y PROTEIN"/>
    <property type="match status" value="1"/>
</dbReference>
<dbReference type="PANTHER" id="PTHR10270">
    <property type="entry name" value="SOX TRANSCRIPTION FACTOR"/>
    <property type="match status" value="1"/>
</dbReference>
<dbReference type="Pfam" id="PF00505">
    <property type="entry name" value="HMG_box"/>
    <property type="match status" value="1"/>
</dbReference>
<dbReference type="SMART" id="SM00398">
    <property type="entry name" value="HMG"/>
    <property type="match status" value="1"/>
</dbReference>
<dbReference type="SUPFAM" id="SSF47095">
    <property type="entry name" value="HMG-box"/>
    <property type="match status" value="1"/>
</dbReference>
<dbReference type="PROSITE" id="PS50118">
    <property type="entry name" value="HMG_BOX_2"/>
    <property type="match status" value="1"/>
</dbReference>
<proteinExistence type="evidence at protein level"/>
<feature type="chain" id="PRO_0000048687" description="Sex-determining region Y protein">
    <location>
        <begin position="1"/>
        <end position="392"/>
    </location>
</feature>
<feature type="DNA-binding region" description="HMG box" evidence="3">
    <location>
        <begin position="5"/>
        <end position="73"/>
    </location>
</feature>
<feature type="region of interest" description="Sufficient for interaction with KPNB1" evidence="2">
    <location>
        <begin position="4"/>
        <end position="81"/>
    </location>
</feature>
<feature type="region of interest" description="Required for nuclear localization" evidence="2">
    <location>
        <begin position="6"/>
        <end position="22"/>
    </location>
</feature>
<feature type="region of interest" description="Sufficient for interaction with EP300" evidence="2">
    <location>
        <begin position="52"/>
        <end position="84"/>
    </location>
</feature>
<feature type="region of interest" description="Required for nuclear localization" evidence="2">
    <location>
        <begin position="75"/>
        <end position="81"/>
    </location>
</feature>
<feature type="region of interest" description="Necessary for interaction with ZNF208 isoform KRAB-O" evidence="10">
    <location>
        <begin position="92"/>
        <end position="144"/>
    </location>
</feature>
<feature type="region of interest" description="Necessary for interaction with SLC9A3R2 and nuclear accumulation of SLC9A3R2" evidence="11">
    <location>
        <begin position="94"/>
        <end position="138"/>
    </location>
</feature>
<feature type="region of interest" description="Disordered" evidence="4">
    <location>
        <begin position="142"/>
        <end position="361"/>
    </location>
</feature>
<feature type="compositionally biased region" description="Low complexity" evidence="4">
    <location>
        <begin position="144"/>
        <end position="181"/>
    </location>
</feature>
<feature type="compositionally biased region" description="Basic and acidic residues" evidence="4">
    <location>
        <begin position="182"/>
        <end position="197"/>
    </location>
</feature>
<feature type="compositionally biased region" description="Basic and acidic residues" evidence="4">
    <location>
        <begin position="210"/>
        <end position="228"/>
    </location>
</feature>
<feature type="compositionally biased region" description="Low complexity" evidence="4">
    <location>
        <begin position="229"/>
        <end position="238"/>
    </location>
</feature>
<feature type="compositionally biased region" description="Basic and acidic residues" evidence="4">
    <location>
        <begin position="239"/>
        <end position="250"/>
    </location>
</feature>
<feature type="compositionally biased region" description="Basic and acidic residues" evidence="4">
    <location>
        <begin position="261"/>
        <end position="295"/>
    </location>
</feature>
<feature type="compositionally biased region" description="Basic and acidic residues" evidence="4">
    <location>
        <begin position="313"/>
        <end position="349"/>
    </location>
</feature>
<feature type="compositionally biased region" description="Low complexity" evidence="4">
    <location>
        <begin position="350"/>
        <end position="361"/>
    </location>
</feature>
<feature type="modified residue" description="N6-acetyllysine" evidence="9">
    <location>
        <position position="81"/>
    </location>
</feature>
<feature type="splice variant" id="VSP_060898" description="In isoform Sry-S." evidence="15">
    <original>WKGIKHCTGPDPEPF</original>
    <variation>EHTPYQEHLSTALWLAVS</variation>
    <location>
        <begin position="378"/>
        <end position="392"/>
    </location>
</feature>
<feature type="sequence variant" description="In strain: Torino." evidence="18">
    <original>I</original>
    <variation>T</variation>
    <location>
        <position position="63"/>
    </location>
</feature>
<feature type="sequence variant" description="In strain: Torino." evidence="18">
    <original>W</original>
    <variation>L</variation>
    <location>
        <position position="133"/>
    </location>
</feature>
<feature type="sequence variant" description="In strain: Torino." evidence="18">
    <original>LQQ</original>
    <variation>P</variation>
    <location>
        <begin position="143"/>
        <end position="145"/>
    </location>
</feature>
<feature type="sequence variant" description="In strain: Torino." evidence="18">
    <location>
        <begin position="169"/>
        <end position="170"/>
    </location>
</feature>
<feature type="sequence variant" description="In strain: Torino." evidence="18">
    <original>H</original>
    <variation>Q</variation>
    <location>
        <position position="209"/>
    </location>
</feature>
<feature type="sequence variant" description="In strain: Torino." evidence="18">
    <original>E</original>
    <variation>Q</variation>
    <location>
        <position position="211"/>
    </location>
</feature>
<feature type="sequence variant" description="In strain: Torino." evidence="18">
    <location>
        <begin position="235"/>
        <end position="392"/>
    </location>
</feature>
<feature type="mutagenesis site" description="Abolishes acetylation." evidence="9">
    <original>K</original>
    <variation>R</variation>
    <location>
        <position position="81"/>
    </location>
</feature>
<feature type="short sequence motif" description="Degron" evidence="15">
    <location sequence="Q05738-2">
        <begin position="389"/>
        <end position="395"/>
    </location>
</feature>
<feature type="mutagenesis site" description="Eliminates the C-terminal degron and promotes stabilization of the protein." evidence="15">
    <original>V</original>
    <variation>P</variation>
    <location sequence="Q05738-2">
        <position position="394"/>
    </location>
</feature>
<keyword id="KW-0007">Acetylation</keyword>
<keyword id="KW-0010">Activator</keyword>
<keyword id="KW-0013">ADP-ribosylation</keyword>
<keyword id="KW-0025">Alternative splicing</keyword>
<keyword id="KW-0112">Calmodulin-binding</keyword>
<keyword id="KW-0963">Cytoplasm</keyword>
<keyword id="KW-0221">Differentiation</keyword>
<keyword id="KW-0238">DNA-binding</keyword>
<keyword id="KW-0539">Nucleus</keyword>
<keyword id="KW-1185">Reference proteome</keyword>
<keyword id="KW-0678">Repressor</keyword>
<keyword id="KW-0726">Sexual differentiation</keyword>
<keyword id="KW-0804">Transcription</keyword>
<keyword id="KW-0805">Transcription regulation</keyword>
<reference key="1">
    <citation type="journal article" date="1992" name="Proc. Natl. Acad. Sci. U.S.A.">
        <title>Inverted repeat structure of the Sry locus in mice.</title>
        <authorList>
            <person name="Gubbay J."/>
            <person name="Vivian N."/>
            <person name="Economou A."/>
            <person name="Jackson D."/>
            <person name="Goodfellow P."/>
        </authorList>
    </citation>
    <scope>NUCLEOTIDE SEQUENCE [GENOMIC DNA]</scope>
    <source>
        <strain>129</strain>
        <tissue>Spleen</tissue>
    </source>
</reference>
<reference key="2">
    <citation type="journal article" date="1993" name="Nature">
        <title>Rapid evolution of the sex determining locus in Old World mice and rats.</title>
        <authorList>
            <person name="Tucker P.K."/>
            <person name="Lundrigan B.L."/>
        </authorList>
    </citation>
    <scope>NUCLEOTIDE SEQUENCE [GENOMIC DNA]</scope>
</reference>
<reference key="3">
    <citation type="journal article" date="1994" name="Nat. Genet.">
        <title>Polymorphism of a CAG trinucleotide repeat within Sry correlates with B6.YDom sex reversal.</title>
        <authorList>
            <person name="Coward P."/>
            <person name="Nagai K."/>
            <person name="Chen D."/>
            <person name="Thomas H.D."/>
            <person name="Nagamine C.M."/>
            <person name="Lau Y.-F.C."/>
        </authorList>
    </citation>
    <scope>NUCLEOTIDE SEQUENCE [GENOMIC DNA]</scope>
    <scope>POLYMORPHISM</scope>
    <scope>VARIANTS THR-63; LEU-133; 143-LEU--GLN-145 DELINS PRO; 169-HIS-GLN-170 DEL; GLN-209; GLN-211 AND 235-GLN--SER-395 DEL</scope>
    <source>
        <strain>Torino</strain>
        <tissue>Liver</tissue>
    </source>
</reference>
<reference key="4">
    <citation type="journal article" date="2020" name="Science">
        <title>The mouse Sry locus harbors a cryptic exon that is essential for male sex determination.</title>
        <authorList>
            <person name="Miyawaki S."/>
            <person name="Kuroki S."/>
            <person name="Maeda R."/>
            <person name="Okashita N."/>
            <person name="Koopman P."/>
            <person name="Tachibana M."/>
        </authorList>
    </citation>
    <scope>NUCLEOTIDE SEQUENCE [MRNA] (ISOFORM SRY-T)</scope>
    <scope>ALTERNATIVE SPLICING (ISOFORMS SRY-S AND SRY-T)</scope>
    <scope>FUNCTION (ISOFORMS SRY-S AND SRY-T)</scope>
    <scope>PROTEIN DEGRADATION (ISOFORM SRY-S)</scope>
    <scope>TISSUE SPECIFICITY (ISOFORM SRY-T)</scope>
    <scope>MUTAGENESIS OF VAL-394 (ISOFORM SRY-S)</scope>
    <scope>DISRUPTION PHENOTYPE (ISOFORM SRY-T)</scope>
</reference>
<reference key="5">
    <citation type="journal article" date="1990" name="Nature">
        <title>A gene mapping to the sex-determining region of the mouse Y chromosome is a member of a novel family of embryonically expressed genes.</title>
        <authorList>
            <person name="Gubbay J."/>
            <person name="Collignon J."/>
            <person name="Koopman P."/>
            <person name="Capel B."/>
            <person name="Economou A."/>
            <person name="Munsterberg A."/>
            <person name="Vivian N."/>
            <person name="Goodfellow P."/>
            <person name="Lovell-Badge R."/>
        </authorList>
    </citation>
    <scope>NUCLEOTIDE SEQUENCE [GENOMIC DNA] OF 1-124</scope>
    <source>
        <strain>129</strain>
    </source>
</reference>
<reference key="6">
    <citation type="journal article" date="1994" name="Nucleic Acids Res.">
        <title>Definition of a consensus DNA binding site for SRY.</title>
        <authorList>
            <person name="Harley V.R."/>
            <person name="Lovell-Badge R."/>
            <person name="Goodfellow P.N."/>
        </authorList>
    </citation>
    <scope>FUNCTION</scope>
    <scope>CHARACTERIZATION OF DNA-BINDING</scope>
</reference>
<reference key="7">
    <citation type="journal article" date="1994" name="Proc. Natl. Acad. Sci. U.S.A.">
        <title>Distinct DNA-binding properties of the high mobility group domain of murine and human SRY sex-determining factors.</title>
        <authorList>
            <person name="Giese K."/>
            <person name="Pagel J."/>
            <person name="Grosschedl R."/>
        </authorList>
    </citation>
    <scope>FUNCTION</scope>
    <scope>CHARACTERIZATION OF DNA-BINDING</scope>
</reference>
<reference key="8">
    <citation type="journal article" date="1995" name="Development">
        <title>Expression of Sry, the mouse sex determining gene.</title>
        <authorList>
            <person name="Hacker A."/>
            <person name="Capel B."/>
            <person name="Goodfellow P."/>
            <person name="Lovell-Badge R."/>
        </authorList>
    </citation>
    <scope>DEVELOPMENTAL STAGE</scope>
</reference>
<reference key="9">
    <citation type="journal article" date="1995" name="Nat. Genet.">
        <title>Expression of a linear Sry transcript in the mouse genital ridge.</title>
        <authorList>
            <person name="Jeske Y.W."/>
            <person name="Bowles J."/>
            <person name="Greenfield A."/>
            <person name="Koopman P."/>
        </authorList>
    </citation>
    <scope>DEVELOPMENTAL STAGE</scope>
</reference>
<reference key="10">
    <citation type="journal article" date="2000" name="Neurogenetics">
        <title>Developmental profile of Sry transcripts in mouse brain.</title>
        <authorList>
            <person name="Mayer A."/>
            <person name="Mosler G."/>
            <person name="Just W."/>
            <person name="Pilgrim C."/>
            <person name="Reisert I."/>
        </authorList>
    </citation>
    <scope>TISSUE SPECIFICITY</scope>
</reference>
<reference key="11">
    <citation type="journal article" date="2001" name="Dev. Biol.">
        <title>Evidence that Sry is expressed in pre-Sertoli cells and Sertoli and granulosa cells have a common precursor.</title>
        <authorList>
            <person name="Albrecht K.H."/>
            <person name="Eicher E.M."/>
        </authorList>
    </citation>
    <scope>DEVELOPMENTAL STAGE</scope>
</reference>
<reference key="12">
    <citation type="journal article" date="2001" name="J. Biol. Chem.">
        <title>The C-terminal nuclear localization signal of the sex-determining region Y (SRY) high mobility group domain mediates nuclear import through importin beta 1.</title>
        <authorList>
            <person name="Forwood J.K."/>
            <person name="Harley V."/>
            <person name="Jans D.A."/>
        </authorList>
    </citation>
    <scope>INTERACTION WITH KPNB1</scope>
    <scope>SUBCELLULAR LOCATION</scope>
</reference>
<reference key="13">
    <citation type="journal article" date="2004" name="Biochemistry">
        <title>Sry-directed sex reversal in transgenic mice is robust with respect to enhanced DNA bending: comparison of human and murine HMG boxes.</title>
        <authorList>
            <person name="Phillips N.B."/>
            <person name="Nikolskaya T."/>
            <person name="Jancso-Radek A."/>
            <person name="Ittah V."/>
            <person name="Jiang F."/>
            <person name="Singh R."/>
            <person name="Haas E."/>
            <person name="Weiss M.A."/>
        </authorList>
    </citation>
    <scope>FUNCTION</scope>
    <scope>DNA-BINDING</scope>
</reference>
<reference key="14">
    <citation type="journal article" date="2004" name="EMBO J.">
        <title>Regulation of human SRY subcellular distribution by its acetylation/deacetylation.</title>
        <authorList>
            <person name="Thevenet L."/>
            <person name="Mejean C."/>
            <person name="Moniot B."/>
            <person name="Bonneaud N."/>
            <person name="Galeotti N."/>
            <person name="Aldrian-Herrada G."/>
            <person name="Poulat F."/>
            <person name="Berta P."/>
            <person name="Benkirane M."/>
            <person name="Boizet-Bonhoure B."/>
        </authorList>
    </citation>
    <scope>ACETYLATION AT LYS-81</scope>
    <scope>MUTAGENESIS OF LYS-81</scope>
</reference>
<reference key="15">
    <citation type="journal article" date="2005" name="Biol. Reprod.">
        <title>Sry associates with the heterochromatin protein 1 complex by interacting with a KRAB domain protein.</title>
        <authorList>
            <person name="Oh H.J."/>
            <person name="Li Y."/>
            <person name="Lau Y.-F.C."/>
        </authorList>
    </citation>
    <scope>INTERACTION WITH ZNF208 ISOFORM KRAB-O</scope>
    <scope>TISSUE SPECIFICITY</scope>
    <scope>SUBCELLULAR LOCATION</scope>
</reference>
<reference key="16">
    <citation type="journal article" date="2005" name="J. Biol. Chem.">
        <title>NHERF2/SIP-1 interacts with mouse SRY via a different mechanism than human SRY.</title>
        <authorList>
            <person name="Thevenet L."/>
            <person name="Albrecht K.H."/>
            <person name="Malki S."/>
            <person name="Berta P."/>
            <person name="Boizet-Bonhoure B."/>
            <person name="Poulat F."/>
        </authorList>
    </citation>
    <scope>INTERACTION WITH SLC9A3R2</scope>
</reference>
<reference key="17">
    <citation type="journal article" date="2006" name="Curr. Biol.">
        <title>Direct regulation of adult brain function by the male-specific factor SRY.</title>
        <authorList>
            <person name="Dewing P."/>
            <person name="Chiang C.W."/>
            <person name="Sinchak K."/>
            <person name="Sim H."/>
            <person name="Fernagut P.-O."/>
            <person name="Kelly S."/>
            <person name="Chesselet M.-F."/>
            <person name="Micevych P.E."/>
            <person name="Albrecht K.H."/>
            <person name="Harley V.R."/>
            <person name="Vilain E."/>
        </authorList>
    </citation>
    <scope>SUBCELLULAR LOCATION</scope>
    <scope>TISSUE SPECIFICITY</scope>
</reference>
<reference key="18">
    <citation type="journal article" date="2006" name="Mol. Cell. Endocrinol.">
        <title>The poly(ADP-ribose) polymerase 1 interacts with Sry and modulates its biological functions.</title>
        <authorList>
            <person name="Li Y."/>
            <person name="Oh H.J."/>
            <person name="Lau Y.-F.C."/>
        </authorList>
    </citation>
    <scope>INTERACTION WITH PARP1</scope>
    <scope>ADP-RIBOSYLATION</scope>
    <scope>DNA-BINDING</scope>
    <scope>DEVELOPMENTAL STAGE</scope>
</reference>
<reference key="19">
    <citation type="journal article" date="2009" name="J. Cell Biol.">
        <title>Exportin 4 mediates a novel nuclear import pathway for Sox family transcription factors.</title>
        <authorList>
            <person name="Gontan C."/>
            <person name="Guettler T."/>
            <person name="Engelen E."/>
            <person name="Demmers J."/>
            <person name="Fornerod M."/>
            <person name="Grosveld F.G."/>
            <person name="Tibboel D."/>
            <person name="Goerlich D."/>
            <person name="Poot R.A."/>
            <person name="Rottier R.J."/>
        </authorList>
    </citation>
    <scope>SUBCELLULAR LOCATION</scope>
</reference>
<reference key="20">
    <citation type="journal article" date="2007" name="Dev. Biol.">
        <title>Sry and the hesitant beginnings of male development.</title>
        <authorList>
            <person name="Polanco J.C."/>
            <person name="Koopman P."/>
        </authorList>
    </citation>
    <scope>REVIEW</scope>
</reference>
<reference key="21">
    <citation type="journal article" date="2006" name="Mol. Cell. Endocrinol.">
        <title>KRAB: a partner for SRY action on chromatin.</title>
        <authorList>
            <person name="Oh H.J."/>
            <person name="Lau Y.F."/>
        </authorList>
    </citation>
    <scope>REVIEW</scope>
</reference>
<comment type="function">
    <text evidence="1 2 8 15 19 20">Transcriptional regulator that controls a genetic switch in male development (PubMed:33004521). It is necessary and sufficient for initiating male sex determination by directing the development of supporting cell precursors (pre-Sertoli cells) as Sertoli rather than granulosa cells (PubMed:33004521). Involved in different aspects of gene regulation including promoter activation or repression (PubMed:15170344, PubMed:8159753, PubMed:8190643). Binds to the DNA consensus sequence 5'-[AT]AACAA[AT]-3' (PubMed:15170344, PubMed:8159753, PubMed:8190643). SRY HMG box recognizes DNA by partial intercalation in the minor groove and promotes DNA bending (PubMed:15170344, PubMed:8159753, PubMed:8190643). Also involved in pre-mRNA splicing (By similarity). In male adult brain involved in the maintenance of motor functions of dopaminergic neurons (By similarity).</text>
</comment>
<comment type="function">
    <molecule>Isoform Sry-T</molecule>
    <text evidence="15">Constitutes the major isoform, which is necessary and sufficient for initiating male sex determination.</text>
</comment>
<comment type="function">
    <molecule>Isoform Sry-S</molecule>
    <text evidence="15">Constitutes a minor isoform, which is unstable due to the presence of a degron at the C-terminus that promotes its degradation (PubMed:33004521). Not necessary and sufficient for initiating male sex determination (PubMed:33004521).</text>
</comment>
<comment type="subunit">
    <text evidence="2 6 10 11 13">Interacts with KPNB1, ZNF208 isoform KRAB-O, PARP1 and SLC9A3R2 (PubMed:11535586, PubMed:15469996, PubMed:16166090, PubMed:16904257). The interaction with KPNB1 is sensitive to dissociation by Ran in the GTP-bound form (PubMed:11535586). Interaction with PARP1 impaired its DNA-binding activity (PubMed:16904257). Interacts with CALM, EP300, HDAC3 and WT1 (By similarity). The interaction with EP300 modulates its DNA-binding activity (By similarity).</text>
</comment>
<comment type="interaction">
    <interactant intactId="EBI-7820116">
        <id>Q05738</id>
    </interactant>
    <interactant intactId="EBI-1149760">
        <id>Q15599</id>
        <label>NHERF2</label>
    </interactant>
    <organismsDiffer>true</organismsDiffer>
    <experiments>5</experiments>
</comment>
<comment type="subcellular location">
    <subcellularLocation>
        <location evidence="2">Nucleus speckle</location>
    </subcellularLocation>
    <subcellularLocation>
        <location evidence="6 10 12 14">Cytoplasm</location>
    </subcellularLocation>
    <subcellularLocation>
        <location evidence="14">Nucleus</location>
    </subcellularLocation>
    <text evidence="2 10 14">Acetylation contributes to its nuclear localization and deacetylation by HDAC3 induces a cytoplasmic delocalization (By similarity). Colocalizes in the nucleus with ZNF208 isoform KRAB-O and tyrosine hydroxylase (TH) (PubMed:15469996). Colocalizes with SOX6 in speckles. Colocalizes with CAML in the nucleus (By similarity). Nuclear import is facilitated by XPO4, a protein that usually acts as a nuclear export signal receptor (PubMed:19349578).</text>
</comment>
<comment type="alternative products">
    <event type="alternative splicing"/>
    <isoform>
        <id>Q05738-1</id>
        <name evidence="22">Sry-T</name>
        <sequence type="displayed"/>
    </isoform>
    <isoform>
        <id>Q05738-2</id>
        <name evidence="22">Sry-S</name>
        <sequence type="described" ref="VSP_060898"/>
    </isoform>
</comment>
<comment type="tissue specificity">
    <text evidence="5 7 10 12 13 16 17">Expressed in gonadal somatic pre-Sertoli cells (PubMed:11784049, PubMed:16904257, PubMed:7600978, PubMed:7670499). Expressed in the substantia nigra of the brain (at protein level). Expressed in diencephalon, cortex, the substantia nigra of the midbrain and the medial mammillary bodies of the hypothalamus of male, but not female.</text>
</comment>
<comment type="tissue specificity">
    <molecule>Isoform Sry-T</molecule>
    <text evidence="15">Expressed in gonadal somatic pre-Sertoli cells (PubMed:33004521). While it is expressed at lower level compared to isoform Sry-S, this form is more stable and constitutes the predominant protein product of the Sry locus in XY gonads (at protein level) (PubMed:33004521).</text>
</comment>
<comment type="developmental stage">
    <text evidence="7 13 16 17">Expressed in gonadal somatic pre-Sertoli cells from 10.5 to 11.5 dpc. Expressed in pre-Sertoli cells located centrally in the genital ridge and then later in cells located at the cranial and caudal poles (at protein level).</text>
</comment>
<comment type="domain">
    <text evidence="19 20">DNA binding and bending properties of the HMG domains of mouse and human SRY differ form each other. Mouse SRY shows less extensive minor groove contacts with DNA and a higher specificity of sequence recognition than human SRY.</text>
</comment>
<comment type="PTM">
    <molecule>Isoform Sry-S</molecule>
    <text evidence="15">Degraded due to the presence of a degron at the C-terminus that promotes its degradation.</text>
</comment>
<comment type="PTM">
    <text evidence="2">Phosphorylated on serine residues by PKA (By similarity). Phosphorylation by PKA enhances its DNA-binding activity and stimulates transcription repression (By similarity).</text>
</comment>
<comment type="PTM">
    <text evidence="9">Acetylation of Lys-81 contributes to its nuclear localization and enhances its interaction with KPNB1.</text>
</comment>
<comment type="PTM">
    <text evidence="13">Poly-ADP-ribosylated by PARP1 (PubMed:16904257). ADP-ribosylation reduces its DNA-binding activity (PubMed:16904257).</text>
</comment>
<comment type="polymorphism">
    <text evidence="18">Different alleles occur in strains of Mus musculus (molossinus or domesticus). In particular the poly-Gln region in 167-177 is polymorphic with either 11, 12 or 13 Gln. The nature of this poly-Gln tract could affect the protein's function by disturbing its secondary structure, perhaps by preventing efficient contact with another protein.</text>
</comment>
<comment type="disruption phenotype">
    <molecule>Isoform Sry-T</molecule>
    <text evidence="15">Specific deletion of isoform Sry-T in XY mice results in complete male-to-female sex reversal.</text>
</comment>
<comment type="miscellaneous">
    <molecule>Isoform Sry-T</molecule>
    <text evidence="15">SRY protein has long been thought to be encoded by a single exon, coding for Sry-S (PubMed:33004521). However, in addition to the isoform coded by a single exon, Sry-S, an isoform harboring an additional exon, isoform Sry-T, was identified (PubMed:33004521). Isoform Sry-T constitues the major isoform, as isoform Sry-S is unstable due to the presence of the degron at the C-terminus (PubMed:33004521).</text>
</comment>
<comment type="similarity">
    <text evidence="23">Belongs to the SRY family.</text>
</comment>
<comment type="online information" name="Protein Spotlight">
    <link uri="https://www.proteinspotlight.org/back_issues/080"/>
    <text>The tenuous nature of sex - Issue 80 of March 2007</text>
</comment>
<accession>Q05738</accession>
<protein>
    <recommendedName>
        <fullName evidence="21">Sex-determining region Y protein</fullName>
    </recommendedName>
    <alternativeName>
        <fullName evidence="2">Testis-determining factor</fullName>
    </alternativeName>
</protein>
<organism>
    <name type="scientific">Mus musculus</name>
    <name type="common">Mouse</name>
    <dbReference type="NCBI Taxonomy" id="10090"/>
    <lineage>
        <taxon>Eukaryota</taxon>
        <taxon>Metazoa</taxon>
        <taxon>Chordata</taxon>
        <taxon>Craniata</taxon>
        <taxon>Vertebrata</taxon>
        <taxon>Euteleostomi</taxon>
        <taxon>Mammalia</taxon>
        <taxon>Eutheria</taxon>
        <taxon>Euarchontoglires</taxon>
        <taxon>Glires</taxon>
        <taxon>Rodentia</taxon>
        <taxon>Myomorpha</taxon>
        <taxon>Muroidea</taxon>
        <taxon>Muridae</taxon>
        <taxon>Murinae</taxon>
        <taxon>Mus</taxon>
        <taxon>Mus</taxon>
    </lineage>
</organism>
<name>SRY_MOUSE</name>
<evidence type="ECO:0000250" key="1">
    <source>
        <dbReference type="UniProtKB" id="P36394"/>
    </source>
</evidence>
<evidence type="ECO:0000250" key="2">
    <source>
        <dbReference type="UniProtKB" id="Q05066"/>
    </source>
</evidence>
<evidence type="ECO:0000255" key="3">
    <source>
        <dbReference type="PROSITE-ProRule" id="PRU00267"/>
    </source>
</evidence>
<evidence type="ECO:0000256" key="4">
    <source>
        <dbReference type="SAM" id="MobiDB-lite"/>
    </source>
</evidence>
<evidence type="ECO:0000269" key="5">
    <source>
    </source>
</evidence>
<evidence type="ECO:0000269" key="6">
    <source>
    </source>
</evidence>
<evidence type="ECO:0000269" key="7">
    <source>
    </source>
</evidence>
<evidence type="ECO:0000269" key="8">
    <source>
    </source>
</evidence>
<evidence type="ECO:0000269" key="9">
    <source>
    </source>
</evidence>
<evidence type="ECO:0000269" key="10">
    <source>
    </source>
</evidence>
<evidence type="ECO:0000269" key="11">
    <source>
    </source>
</evidence>
<evidence type="ECO:0000269" key="12">
    <source>
    </source>
</evidence>
<evidence type="ECO:0000269" key="13">
    <source>
    </source>
</evidence>
<evidence type="ECO:0000269" key="14">
    <source>
    </source>
</evidence>
<evidence type="ECO:0000269" key="15">
    <source>
    </source>
</evidence>
<evidence type="ECO:0000269" key="16">
    <source>
    </source>
</evidence>
<evidence type="ECO:0000269" key="17">
    <source>
    </source>
</evidence>
<evidence type="ECO:0000269" key="18">
    <source>
    </source>
</evidence>
<evidence type="ECO:0000269" key="19">
    <source>
    </source>
</evidence>
<evidence type="ECO:0000269" key="20">
    <source>
    </source>
</evidence>
<evidence type="ECO:0000303" key="21">
    <source>
    </source>
</evidence>
<evidence type="ECO:0000303" key="22">
    <source>
    </source>
</evidence>
<evidence type="ECO:0000305" key="23"/>
<evidence type="ECO:0000312" key="24">
    <source>
        <dbReference type="MGI" id="MGI:98660"/>
    </source>
</evidence>
<sequence>MEGHVKRPMNAFMVWSRGERHKLAQQNPSMQNTEISKQLGCRWKSLTEAEKRPFFQEAQRLKILHREKYPNYKYQPHRRAKVSQRSGILQPAVASTKLYNLLQWDRNPHAITYRQDWSRAAHLYSKNQQSFYWQPVDIPTGHLQQQQQQQQQQQFHNHHQQQQQFYDHHQQQQQQQQQQQQFHDHHQQKQQFHDHHQQQQQFHDHHHHHQEQQFHDHHQQQQQFHDHQQQQQQQQQQQFHDHHQQKQQFHDHHHHQQQQQFHDHQQQQQQFHDHQQQQHQFHDHPQQKQQFHDHPQQQQQFHDHHHQQQQKQQFHDHHQQKQQFHDHHQQKQQFHDHHQQQQQFHDHHQQQQQQQQQQQQQFHDQQLTYLLTADITGWKGIKHCTGPDPEPF</sequence>
<gene>
    <name evidence="21 24" type="primary">Sry</name>
    <name evidence="2" type="synonym">Tdf</name>
    <name evidence="24" type="synonym">Tdy</name>
</gene>